<organism>
    <name type="scientific">Saccharolobus islandicus (strain M.14.25 / Kamchatka #1)</name>
    <name type="common">Sulfolobus islandicus</name>
    <dbReference type="NCBI Taxonomy" id="427317"/>
    <lineage>
        <taxon>Archaea</taxon>
        <taxon>Thermoproteota</taxon>
        <taxon>Thermoprotei</taxon>
        <taxon>Sulfolobales</taxon>
        <taxon>Sulfolobaceae</taxon>
        <taxon>Saccharolobus</taxon>
    </lineage>
</organism>
<dbReference type="EMBL" id="CP001400">
    <property type="protein sequence ID" value="ACP38710.1"/>
    <property type="molecule type" value="Genomic_DNA"/>
</dbReference>
<dbReference type="SMR" id="C3MYS6"/>
<dbReference type="KEGG" id="sia:M1425_1966"/>
<dbReference type="HOGENOM" id="CLU_175093_1_0_2"/>
<dbReference type="Proteomes" id="UP000001350">
    <property type="component" value="Chromosome"/>
</dbReference>
<dbReference type="GO" id="GO:1990904">
    <property type="term" value="C:ribonucleoprotein complex"/>
    <property type="evidence" value="ECO:0007669"/>
    <property type="project" value="UniProtKB-KW"/>
</dbReference>
<dbReference type="GO" id="GO:0005840">
    <property type="term" value="C:ribosome"/>
    <property type="evidence" value="ECO:0007669"/>
    <property type="project" value="UniProtKB-KW"/>
</dbReference>
<dbReference type="GO" id="GO:0003735">
    <property type="term" value="F:structural constituent of ribosome"/>
    <property type="evidence" value="ECO:0007669"/>
    <property type="project" value="InterPro"/>
</dbReference>
<dbReference type="GO" id="GO:0006412">
    <property type="term" value="P:translation"/>
    <property type="evidence" value="ECO:0007669"/>
    <property type="project" value="UniProtKB-UniRule"/>
</dbReference>
<dbReference type="Gene3D" id="4.10.1060.50">
    <property type="match status" value="1"/>
</dbReference>
<dbReference type="HAMAP" id="MF_00788">
    <property type="entry name" value="Ribosomal_eL40"/>
    <property type="match status" value="1"/>
</dbReference>
<dbReference type="InterPro" id="IPR023657">
    <property type="entry name" value="Ribosomal_eL40_arc"/>
</dbReference>
<dbReference type="InterPro" id="IPR001975">
    <property type="entry name" value="Ribosomal_eL40_dom"/>
</dbReference>
<dbReference type="InterPro" id="IPR038587">
    <property type="entry name" value="Ribosomal_eL40_sf"/>
</dbReference>
<dbReference type="InterPro" id="IPR011332">
    <property type="entry name" value="Ribosomal_zn-bd"/>
</dbReference>
<dbReference type="NCBIfam" id="NF003161">
    <property type="entry name" value="PRK04136.1"/>
    <property type="match status" value="1"/>
</dbReference>
<dbReference type="PANTHER" id="PTHR39649">
    <property type="entry name" value="50S RIBOSOMAL PROTEIN L40E"/>
    <property type="match status" value="1"/>
</dbReference>
<dbReference type="PANTHER" id="PTHR39649:SF1">
    <property type="entry name" value="LARGE RIBOSOMAL SUBUNIT PROTEIN EL40"/>
    <property type="match status" value="1"/>
</dbReference>
<dbReference type="Pfam" id="PF01020">
    <property type="entry name" value="Ribosomal_L40e"/>
    <property type="match status" value="1"/>
</dbReference>
<dbReference type="SMART" id="SM01377">
    <property type="entry name" value="Ribosomal_L40e"/>
    <property type="match status" value="1"/>
</dbReference>
<dbReference type="SUPFAM" id="SSF57829">
    <property type="entry name" value="Zn-binding ribosomal proteins"/>
    <property type="match status" value="1"/>
</dbReference>
<feature type="chain" id="PRO_1000212951" description="Large ribosomal subunit protein eL40">
    <location>
        <begin position="1"/>
        <end position="56"/>
    </location>
</feature>
<proteinExistence type="inferred from homology"/>
<protein>
    <recommendedName>
        <fullName evidence="1">Large ribosomal subunit protein eL40</fullName>
    </recommendedName>
    <alternativeName>
        <fullName evidence="2">50S ribosomal protein L40e</fullName>
    </alternativeName>
</protein>
<gene>
    <name evidence="1" type="primary">rpl40e</name>
    <name type="ordered locus">M1425_1966</name>
</gene>
<keyword id="KW-0687">Ribonucleoprotein</keyword>
<keyword id="KW-0689">Ribosomal protein</keyword>
<accession>C3MYS6</accession>
<sequence length="56" mass="6445">MPLTDPAKLQIVQQRVFLKKVCRKCGALNPIRATKCRRCHSTNLRLKKKELPTKKG</sequence>
<name>RL40_SACI4</name>
<evidence type="ECO:0000255" key="1">
    <source>
        <dbReference type="HAMAP-Rule" id="MF_00788"/>
    </source>
</evidence>
<evidence type="ECO:0000305" key="2"/>
<comment type="similarity">
    <text evidence="1">Belongs to the eukaryotic ribosomal protein eL40 family.</text>
</comment>
<reference key="1">
    <citation type="journal article" date="2009" name="Proc. Natl. Acad. Sci. U.S.A.">
        <title>Biogeography of the Sulfolobus islandicus pan-genome.</title>
        <authorList>
            <person name="Reno M.L."/>
            <person name="Held N.L."/>
            <person name="Fields C.J."/>
            <person name="Burke P.V."/>
            <person name="Whitaker R.J."/>
        </authorList>
    </citation>
    <scope>NUCLEOTIDE SEQUENCE [LARGE SCALE GENOMIC DNA]</scope>
    <source>
        <strain>M.14.25 / Kamchatka #1</strain>
    </source>
</reference>